<proteinExistence type="predicted"/>
<sequence>MRFGVVFVITQVLADFTYLGCYSSDAISGLTKKDSYTWQSSSHCTEQCSGHAVAALINGQDCYCGDDVPSDNPDGSCTTSCTGYPMEKCGGSDSYSVYVDESEENDDDSSSAQSSHSSTDDATSTSSTSTTSSSSSSLSSSSTSSSSKQSSSPQSSTMSSTDSSPTSSSLSASSTTTSSISSFSFSQSSSSSSTTSSSTPSSESVRITTSVSPGNMQTSIIYITQSVATATSASAAASSSSASSANNRSTGLSKGAKAGIAVGSILGALLLLGLLLLFLFWRRRQRDDRDNLSEKRASSILASSSRQPPAGSRGAAAGIGANRIRIHVRGRQTGHAGHVETVQRRFVAGTLPLEPRCRRIVPDRRFAGGKPRS</sequence>
<name>YLU2_PICAN</name>
<reference key="1">
    <citation type="journal article" date="1994" name="Yeast">
        <title>Isolation and characterization of the LEU2 gene of Hansenula polymorpha.</title>
        <authorList>
            <person name="Agaphonov M.O."/>
            <person name="Poznyakovski A.I."/>
            <person name="Bogdanova A.I."/>
            <person name="Ter-Avanesyan M.D."/>
        </authorList>
    </citation>
    <scope>NUCLEOTIDE SEQUENCE [GENOMIC DNA]</scope>
    <source>
        <strain>ATCC 34438 / CBS 4732 / DSM 70277 / JCM 3621 / NBRC 1476 / NRRL Y-5445</strain>
    </source>
</reference>
<accession>P34735</accession>
<dbReference type="EMBL" id="U00889">
    <property type="protein sequence ID" value="AAA19110.1"/>
    <property type="molecule type" value="Unassigned_DNA"/>
</dbReference>
<dbReference type="PIR" id="S43455">
    <property type="entry name" value="S43455"/>
</dbReference>
<dbReference type="SMR" id="P34735"/>
<dbReference type="InterPro" id="IPR002889">
    <property type="entry name" value="WSC_carb-bd"/>
</dbReference>
<dbReference type="PANTHER" id="PTHR16861:SF9">
    <property type="entry name" value="CELL WALL INTEGRITY AND STRESS RESPONSE COMPONENT 1"/>
    <property type="match status" value="1"/>
</dbReference>
<dbReference type="PANTHER" id="PTHR16861">
    <property type="entry name" value="GLYCOPROTEIN 38"/>
    <property type="match status" value="1"/>
</dbReference>
<dbReference type="Pfam" id="PF01822">
    <property type="entry name" value="WSC"/>
    <property type="match status" value="1"/>
</dbReference>
<dbReference type="SMART" id="SM00321">
    <property type="entry name" value="WSC"/>
    <property type="match status" value="1"/>
</dbReference>
<dbReference type="PROSITE" id="PS51212">
    <property type="entry name" value="WSC"/>
    <property type="match status" value="1"/>
</dbReference>
<feature type="chain" id="PRO_0000212563" description="Uncharacterized protein in LEU2 3'region">
    <location>
        <begin position="1"/>
        <end position="373" status="greater than"/>
    </location>
</feature>
<feature type="domain" description="WSC" evidence="1">
    <location>
        <begin position="15"/>
        <end position="101"/>
    </location>
</feature>
<feature type="region of interest" description="Disordered" evidence="2">
    <location>
        <begin position="101"/>
        <end position="171"/>
    </location>
</feature>
<feature type="region of interest" description="Disordered" evidence="2">
    <location>
        <begin position="183"/>
        <end position="210"/>
    </location>
</feature>
<feature type="region of interest" description="Disordered" evidence="2">
    <location>
        <begin position="291"/>
        <end position="316"/>
    </location>
</feature>
<feature type="compositionally biased region" description="Low complexity" evidence="2">
    <location>
        <begin position="110"/>
        <end position="171"/>
    </location>
</feature>
<feature type="compositionally biased region" description="Low complexity" evidence="2">
    <location>
        <begin position="183"/>
        <end position="204"/>
    </location>
</feature>
<feature type="non-terminal residue">
    <location>
        <position position="373"/>
    </location>
</feature>
<protein>
    <recommendedName>
        <fullName>Uncharacterized protein in LEU2 3'region</fullName>
    </recommendedName>
</protein>
<evidence type="ECO:0000255" key="1">
    <source>
        <dbReference type="PROSITE-ProRule" id="PRU00558"/>
    </source>
</evidence>
<evidence type="ECO:0000256" key="2">
    <source>
        <dbReference type="SAM" id="MobiDB-lite"/>
    </source>
</evidence>
<organism>
    <name type="scientific">Pichia angusta</name>
    <name type="common">Yeast</name>
    <name type="synonym">Hansenula polymorpha</name>
    <dbReference type="NCBI Taxonomy" id="870730"/>
    <lineage>
        <taxon>Eukaryota</taxon>
        <taxon>Fungi</taxon>
        <taxon>Dikarya</taxon>
        <taxon>Ascomycota</taxon>
        <taxon>Saccharomycotina</taxon>
        <taxon>Pichiomycetes</taxon>
        <taxon>Pichiales</taxon>
        <taxon>Pichiaceae</taxon>
        <taxon>Ogataea</taxon>
    </lineage>
</organism>